<gene>
    <name evidence="1" type="primary">trpA</name>
</gene>
<keyword id="KW-0028">Amino-acid biosynthesis</keyword>
<keyword id="KW-0057">Aromatic amino acid biosynthesis</keyword>
<keyword id="KW-0150">Chloroplast</keyword>
<keyword id="KW-0456">Lyase</keyword>
<keyword id="KW-0934">Plastid</keyword>
<keyword id="KW-0822">Tryptophan biosynthesis</keyword>
<reference key="1">
    <citation type="submission" date="2003-11" db="EMBL/GenBank/DDBJ databases">
        <title>Whole genome sequence of Porphyra yezoensis chloroplast.</title>
        <authorList>
            <person name="Kunimoto M."/>
            <person name="Morishima K."/>
            <person name="Yoshikawa M."/>
            <person name="Fukuda S."/>
            <person name="Kobayashi T."/>
            <person name="Kobayashi M."/>
            <person name="Okazaki T."/>
            <person name="Ohara I."/>
            <person name="Nakayama I."/>
        </authorList>
    </citation>
    <scope>NUCLEOTIDE SEQUENCE [LARGE SCALE GENOMIC DNA]</scope>
    <source>
        <strain>U-51</strain>
    </source>
</reference>
<comment type="function">
    <text evidence="1">The alpha subunit is responsible for the aldol cleavage of indoleglycerol phosphate to indole and glyceraldehyde 3-phosphate.</text>
</comment>
<comment type="catalytic activity">
    <reaction evidence="1">
        <text>(1S,2R)-1-C-(indol-3-yl)glycerol 3-phosphate + L-serine = D-glyceraldehyde 3-phosphate + L-tryptophan + H2O</text>
        <dbReference type="Rhea" id="RHEA:10532"/>
        <dbReference type="ChEBI" id="CHEBI:15377"/>
        <dbReference type="ChEBI" id="CHEBI:33384"/>
        <dbReference type="ChEBI" id="CHEBI:57912"/>
        <dbReference type="ChEBI" id="CHEBI:58866"/>
        <dbReference type="ChEBI" id="CHEBI:59776"/>
        <dbReference type="EC" id="4.2.1.20"/>
    </reaction>
</comment>
<comment type="pathway">
    <text evidence="1">Amino-acid biosynthesis; L-tryptophan biosynthesis; L-tryptophan from chorismate: step 5/5.</text>
</comment>
<comment type="subunit">
    <text evidence="1">Tetramer of two alpha and two beta chains.</text>
</comment>
<comment type="subcellular location">
    <subcellularLocation>
        <location>Plastid</location>
        <location>Chloroplast</location>
    </subcellularLocation>
</comment>
<comment type="similarity">
    <text evidence="1">Belongs to the TrpA family.</text>
</comment>
<proteinExistence type="inferred from homology"/>
<protein>
    <recommendedName>
        <fullName evidence="1">Tryptophan synthase alpha chain</fullName>
        <ecNumber evidence="1">4.2.1.20</ecNumber>
    </recommendedName>
</protein>
<evidence type="ECO:0000255" key="1">
    <source>
        <dbReference type="HAMAP-Rule" id="MF_00131"/>
    </source>
</evidence>
<feature type="chain" id="PRO_0000236294" description="Tryptophan synthase alpha chain">
    <location>
        <begin position="1"/>
        <end position="263"/>
    </location>
</feature>
<feature type="active site" description="Proton acceptor" evidence="1">
    <location>
        <position position="47"/>
    </location>
</feature>
<feature type="active site" description="Proton acceptor" evidence="1">
    <location>
        <position position="58"/>
    </location>
</feature>
<sequence length="263" mass="28543">MNTISSVFENLDKQCALIPFITAGDPDLVSTGKALQILDSYGADIIELGLPYSDPLADGPIIQEASNRALKQGINLNKILSMVKTVNMTIKAPIVLFTYYNPVLHLGINNFIYAISNAGIRGLLIPDLPIEESEYVISVCNLFNIELILLLAPTSSRERISKIIKRAPGCIYLVSTTGVTGQKSQLTSQLKELTETVKTMTNKSIILGFGISTTEQIKEIKGWNINGIVIGSAFVKRLSGNVPEAGLEQIQSFCQDAKNAIIS</sequence>
<geneLocation type="chloroplast"/>
<name>TRPA_PYRYE</name>
<dbReference type="EC" id="4.2.1.20" evidence="1"/>
<dbReference type="EMBL" id="AP006715">
    <property type="protein sequence ID" value="BAE92506.1"/>
    <property type="molecule type" value="Genomic_DNA"/>
</dbReference>
<dbReference type="RefSeq" id="YP_537063.1">
    <property type="nucleotide sequence ID" value="NC_007932.1"/>
</dbReference>
<dbReference type="SMR" id="Q1XDA5"/>
<dbReference type="GeneID" id="3978745"/>
<dbReference type="UniPathway" id="UPA00035">
    <property type="reaction ID" value="UER00044"/>
</dbReference>
<dbReference type="GO" id="GO:0009507">
    <property type="term" value="C:chloroplast"/>
    <property type="evidence" value="ECO:0007669"/>
    <property type="project" value="UniProtKB-SubCell"/>
</dbReference>
<dbReference type="GO" id="GO:0005829">
    <property type="term" value="C:cytosol"/>
    <property type="evidence" value="ECO:0007669"/>
    <property type="project" value="TreeGrafter"/>
</dbReference>
<dbReference type="GO" id="GO:0004834">
    <property type="term" value="F:tryptophan synthase activity"/>
    <property type="evidence" value="ECO:0007669"/>
    <property type="project" value="UniProtKB-UniRule"/>
</dbReference>
<dbReference type="CDD" id="cd04724">
    <property type="entry name" value="Tryptophan_synthase_alpha"/>
    <property type="match status" value="1"/>
</dbReference>
<dbReference type="FunFam" id="3.20.20.70:FF:000037">
    <property type="entry name" value="Tryptophan synthase alpha chain"/>
    <property type="match status" value="1"/>
</dbReference>
<dbReference type="Gene3D" id="3.20.20.70">
    <property type="entry name" value="Aldolase class I"/>
    <property type="match status" value="1"/>
</dbReference>
<dbReference type="HAMAP" id="MF_00131">
    <property type="entry name" value="Trp_synth_alpha"/>
    <property type="match status" value="1"/>
</dbReference>
<dbReference type="InterPro" id="IPR013785">
    <property type="entry name" value="Aldolase_TIM"/>
</dbReference>
<dbReference type="InterPro" id="IPR011060">
    <property type="entry name" value="RibuloseP-bd_barrel"/>
</dbReference>
<dbReference type="InterPro" id="IPR018204">
    <property type="entry name" value="Trp_synthase_alpha_AS"/>
</dbReference>
<dbReference type="InterPro" id="IPR002028">
    <property type="entry name" value="Trp_synthase_suA"/>
</dbReference>
<dbReference type="NCBIfam" id="TIGR00262">
    <property type="entry name" value="trpA"/>
    <property type="match status" value="1"/>
</dbReference>
<dbReference type="PANTHER" id="PTHR43406:SF1">
    <property type="entry name" value="TRYPTOPHAN SYNTHASE ALPHA CHAIN, CHLOROPLASTIC"/>
    <property type="match status" value="1"/>
</dbReference>
<dbReference type="PANTHER" id="PTHR43406">
    <property type="entry name" value="TRYPTOPHAN SYNTHASE, ALPHA CHAIN"/>
    <property type="match status" value="1"/>
</dbReference>
<dbReference type="Pfam" id="PF00290">
    <property type="entry name" value="Trp_syntA"/>
    <property type="match status" value="1"/>
</dbReference>
<dbReference type="SUPFAM" id="SSF51366">
    <property type="entry name" value="Ribulose-phoshate binding barrel"/>
    <property type="match status" value="1"/>
</dbReference>
<dbReference type="PROSITE" id="PS00167">
    <property type="entry name" value="TRP_SYNTHASE_ALPHA"/>
    <property type="match status" value="1"/>
</dbReference>
<organism>
    <name type="scientific">Pyropia yezoensis</name>
    <name type="common">Susabi-nori</name>
    <name type="synonym">Porphyra yezoensis</name>
    <dbReference type="NCBI Taxonomy" id="2788"/>
    <lineage>
        <taxon>Eukaryota</taxon>
        <taxon>Rhodophyta</taxon>
        <taxon>Bangiophyceae</taxon>
        <taxon>Bangiales</taxon>
        <taxon>Bangiaceae</taxon>
        <taxon>Pyropia</taxon>
    </lineage>
</organism>
<accession>Q1XDA5</accession>